<protein>
    <recommendedName>
        <fullName>Leucoanthocyanidin dioxygenase</fullName>
        <shortName>LDOX</shortName>
        <shortName>Leucocyanidin oxygenase</shortName>
        <ecNumber evidence="2">1.14.20.4</ecNumber>
    </recommendedName>
    <alternativeName>
        <fullName>Leucoanthocyanidin hydroxylase</fullName>
    </alternativeName>
</protein>
<name>LDOX_VITVI</name>
<comment type="function">
    <text>Oxidation of leucoanthocyanidins into anthocyanidins.</text>
</comment>
<comment type="catalytic activity">
    <reaction evidence="2">
        <text>a (2R,3S,4S)-leucoanthocyanidin + 2-oxoglutarate + O2 = a 4-H-anthocyanidin with a 3-hydroxy group + succinate + CO2 + 2 H2O</text>
        <dbReference type="Rhea" id="RHEA:54432"/>
        <dbReference type="ChEBI" id="CHEBI:15377"/>
        <dbReference type="ChEBI" id="CHEBI:15379"/>
        <dbReference type="ChEBI" id="CHEBI:16526"/>
        <dbReference type="ChEBI" id="CHEBI:16810"/>
        <dbReference type="ChEBI" id="CHEBI:30031"/>
        <dbReference type="ChEBI" id="CHEBI:138176"/>
        <dbReference type="ChEBI" id="CHEBI:138177"/>
        <dbReference type="EC" id="1.14.20.4"/>
    </reaction>
</comment>
<comment type="cofactor">
    <cofactor evidence="1">
        <name>Fe cation</name>
        <dbReference type="ChEBI" id="CHEBI:24875"/>
    </cofactor>
    <text evidence="1">Binds 1 Fe cation per subunit.</text>
</comment>
<comment type="cofactor">
    <cofactor evidence="1">
        <name>L-ascorbate</name>
        <dbReference type="ChEBI" id="CHEBI:38290"/>
    </cofactor>
    <text evidence="1">Binds 1 ascorbate molecule per subunit.</text>
</comment>
<comment type="pathway">
    <text>Pigment biosynthesis; anthocyanin biosynthesis.</text>
</comment>
<comment type="induction">
    <text>By light.</text>
</comment>
<comment type="similarity">
    <text evidence="4">Belongs to the iron/ascorbate-dependent oxidoreductase family.</text>
</comment>
<proteinExistence type="evidence at transcript level"/>
<evidence type="ECO:0000250" key="1"/>
<evidence type="ECO:0000250" key="2">
    <source>
        <dbReference type="UniProtKB" id="Q96323"/>
    </source>
</evidence>
<evidence type="ECO:0000255" key="3">
    <source>
        <dbReference type="PROSITE-ProRule" id="PRU00805"/>
    </source>
</evidence>
<evidence type="ECO:0000305" key="4"/>
<keyword id="KW-0223">Dioxygenase</keyword>
<keyword id="KW-0284">Flavonoid biosynthesis</keyword>
<keyword id="KW-0408">Iron</keyword>
<keyword id="KW-0479">Metal-binding</keyword>
<keyword id="KW-0560">Oxidoreductase</keyword>
<keyword id="KW-0847">Vitamin C</keyword>
<dbReference type="EC" id="1.14.20.4" evidence="2"/>
<dbReference type="EMBL" id="X75966">
    <property type="protein sequence ID" value="CAA53580.1"/>
    <property type="molecule type" value="mRNA"/>
</dbReference>
<dbReference type="SMR" id="P51093"/>
<dbReference type="PaxDb" id="29760-VIT_02s0025g04720.t01"/>
<dbReference type="eggNOG" id="KOG0143">
    <property type="taxonomic scope" value="Eukaryota"/>
</dbReference>
<dbReference type="UniPathway" id="UPA00009"/>
<dbReference type="ExpressionAtlas" id="P51093">
    <property type="expression patterns" value="baseline and differential"/>
</dbReference>
<dbReference type="GO" id="GO:0031418">
    <property type="term" value="F:L-ascorbic acid binding"/>
    <property type="evidence" value="ECO:0007669"/>
    <property type="project" value="UniProtKB-KW"/>
</dbReference>
<dbReference type="GO" id="GO:0050589">
    <property type="term" value="F:leucocyanidin oxygenase activity"/>
    <property type="evidence" value="ECO:0007669"/>
    <property type="project" value="UniProtKB-EC"/>
</dbReference>
<dbReference type="GO" id="GO:0046872">
    <property type="term" value="F:metal ion binding"/>
    <property type="evidence" value="ECO:0007669"/>
    <property type="project" value="UniProtKB-KW"/>
</dbReference>
<dbReference type="GO" id="GO:0009718">
    <property type="term" value="P:anthocyanin-containing compound biosynthetic process"/>
    <property type="evidence" value="ECO:0007669"/>
    <property type="project" value="UniProtKB-UniPathway"/>
</dbReference>
<dbReference type="FunFam" id="2.60.120.330:FF:000009">
    <property type="entry name" value="Flavonol synthase"/>
    <property type="match status" value="1"/>
</dbReference>
<dbReference type="Gene3D" id="2.60.120.330">
    <property type="entry name" value="B-lactam Antibiotic, Isopenicillin N Synthase, Chain"/>
    <property type="match status" value="1"/>
</dbReference>
<dbReference type="InterPro" id="IPR026992">
    <property type="entry name" value="DIOX_N"/>
</dbReference>
<dbReference type="InterPro" id="IPR044861">
    <property type="entry name" value="IPNS-like_FE2OG_OXY"/>
</dbReference>
<dbReference type="InterPro" id="IPR027443">
    <property type="entry name" value="IPNS-like_sf"/>
</dbReference>
<dbReference type="InterPro" id="IPR005123">
    <property type="entry name" value="Oxoglu/Fe-dep_dioxygenase_dom"/>
</dbReference>
<dbReference type="InterPro" id="IPR050295">
    <property type="entry name" value="Plant_2OG-oxidoreductases"/>
</dbReference>
<dbReference type="PANTHER" id="PTHR47991">
    <property type="entry name" value="OXOGLUTARATE/IRON-DEPENDENT DIOXYGENASE"/>
    <property type="match status" value="1"/>
</dbReference>
<dbReference type="Pfam" id="PF03171">
    <property type="entry name" value="2OG-FeII_Oxy"/>
    <property type="match status" value="1"/>
</dbReference>
<dbReference type="Pfam" id="PF14226">
    <property type="entry name" value="DIOX_N"/>
    <property type="match status" value="1"/>
</dbReference>
<dbReference type="SUPFAM" id="SSF51197">
    <property type="entry name" value="Clavaminate synthase-like"/>
    <property type="match status" value="1"/>
</dbReference>
<dbReference type="PROSITE" id="PS51471">
    <property type="entry name" value="FE2OG_OXY"/>
    <property type="match status" value="1"/>
</dbReference>
<reference key="1">
    <citation type="journal article" date="1994" name="Plant Mol. Biol.">
        <title>Cloning and molecular analysis of structural genes involved in flavonoid and stilbene biosynthesis in grape (Vitis vinifera L.).</title>
        <authorList>
            <person name="Sparvoli F."/>
            <person name="Martin C."/>
            <person name="Scienza A."/>
            <person name="Gavazzi G."/>
            <person name="Tonelli C."/>
        </authorList>
    </citation>
    <scope>NUCLEOTIDE SEQUENCE [MRNA]</scope>
    <source>
        <strain>cv. Lambrusco Foglia Frastagliata</strain>
    </source>
</reference>
<feature type="chain" id="PRO_0000067304" description="Leucoanthocyanidin dioxygenase">
    <location>
        <begin position="1"/>
        <end position="362"/>
    </location>
</feature>
<feature type="domain" description="Fe2OG dioxygenase" evidence="3">
    <location>
        <begin position="211"/>
        <end position="313"/>
    </location>
</feature>
<feature type="binding site" evidence="3">
    <location>
        <position position="238"/>
    </location>
    <ligand>
        <name>Fe cation</name>
        <dbReference type="ChEBI" id="CHEBI:24875"/>
    </ligand>
</feature>
<feature type="binding site" evidence="3">
    <location>
        <position position="240"/>
    </location>
    <ligand>
        <name>Fe cation</name>
        <dbReference type="ChEBI" id="CHEBI:24875"/>
    </ligand>
</feature>
<feature type="binding site" evidence="3">
    <location>
        <position position="294"/>
    </location>
    <ligand>
        <name>Fe cation</name>
        <dbReference type="ChEBI" id="CHEBI:24875"/>
    </ligand>
</feature>
<accession>P51093</accession>
<sequence length="362" mass="41036">MVTSVAPRVESLSSSGIQSIPKEYIRPQEELTSIGNVFEEEKKDEGPQVPTIDLKDIESEDEVVRREIRERCREELKKAAMEWGVMHLVNHGISDDLINRVKVAGETFFNLPMEEKEKYANDQASGKIAGYGSKLANNASGQLEWEDYFFHLIFPEDKRDMTIWPKTPSDYVPATCEYSVKLRSLATKILSVLSLGLGLEEGRLEKEVGGMEELLLQKKINYYPKCPQPELALGVEAHTDVSALTFILHNMVPGLQLFYEGKWVTAKCVPNSIIMHIGDTIEILSNGKYKSILHRGLVNKEKVRISWAVFCEPPKEKIILKAHCQRRCLRLSHHSSHLAPFPNIFSTSSSGRPRRLYSPNEL</sequence>
<organism>
    <name type="scientific">Vitis vinifera</name>
    <name type="common">Grape</name>
    <dbReference type="NCBI Taxonomy" id="29760"/>
    <lineage>
        <taxon>Eukaryota</taxon>
        <taxon>Viridiplantae</taxon>
        <taxon>Streptophyta</taxon>
        <taxon>Embryophyta</taxon>
        <taxon>Tracheophyta</taxon>
        <taxon>Spermatophyta</taxon>
        <taxon>Magnoliopsida</taxon>
        <taxon>eudicotyledons</taxon>
        <taxon>Gunneridae</taxon>
        <taxon>Pentapetalae</taxon>
        <taxon>rosids</taxon>
        <taxon>Vitales</taxon>
        <taxon>Vitaceae</taxon>
        <taxon>Viteae</taxon>
        <taxon>Vitis</taxon>
    </lineage>
</organism>